<accession>B8EM89</accession>
<sequence>MRAATISRKTKETEIAVSVDLDGTGAATVSTGVGFFDHMLEQLARHSLIDISVAATGDLHIDQHHTVEDTGIALGQALRQALGDRAGIARYANALLPMDETLTRAAIDVSGRPFLVFKTEFRRAKIGEFDTELVREFFQAFVMNAGLTVHIETLYGENAHHIAESCFKALARALRLAIEVDPRQKGAIPSTKGSLAG</sequence>
<keyword id="KW-0028">Amino-acid biosynthesis</keyword>
<keyword id="KW-0963">Cytoplasm</keyword>
<keyword id="KW-0368">Histidine biosynthesis</keyword>
<keyword id="KW-0456">Lyase</keyword>
<keyword id="KW-1185">Reference proteome</keyword>
<evidence type="ECO:0000255" key="1">
    <source>
        <dbReference type="HAMAP-Rule" id="MF_00076"/>
    </source>
</evidence>
<proteinExistence type="inferred from homology"/>
<gene>
    <name evidence="1" type="primary">hisB</name>
    <name type="ordered locus">Msil_2554</name>
</gene>
<protein>
    <recommendedName>
        <fullName evidence="1">Imidazoleglycerol-phosphate dehydratase</fullName>
        <shortName evidence="1">IGPD</shortName>
        <ecNumber evidence="1">4.2.1.19</ecNumber>
    </recommendedName>
</protein>
<comment type="catalytic activity">
    <reaction evidence="1">
        <text>D-erythro-1-(imidazol-4-yl)glycerol 3-phosphate = 3-(imidazol-4-yl)-2-oxopropyl phosphate + H2O</text>
        <dbReference type="Rhea" id="RHEA:11040"/>
        <dbReference type="ChEBI" id="CHEBI:15377"/>
        <dbReference type="ChEBI" id="CHEBI:57766"/>
        <dbReference type="ChEBI" id="CHEBI:58278"/>
        <dbReference type="EC" id="4.2.1.19"/>
    </reaction>
</comment>
<comment type="pathway">
    <text evidence="1">Amino-acid biosynthesis; L-histidine biosynthesis; L-histidine from 5-phospho-alpha-D-ribose 1-diphosphate: step 6/9.</text>
</comment>
<comment type="subcellular location">
    <subcellularLocation>
        <location evidence="1">Cytoplasm</location>
    </subcellularLocation>
</comment>
<comment type="similarity">
    <text evidence="1">Belongs to the imidazoleglycerol-phosphate dehydratase family.</text>
</comment>
<organism>
    <name type="scientific">Methylocella silvestris (strain DSM 15510 / CIP 108128 / LMG 27833 / NCIMB 13906 / BL2)</name>
    <dbReference type="NCBI Taxonomy" id="395965"/>
    <lineage>
        <taxon>Bacteria</taxon>
        <taxon>Pseudomonadati</taxon>
        <taxon>Pseudomonadota</taxon>
        <taxon>Alphaproteobacteria</taxon>
        <taxon>Hyphomicrobiales</taxon>
        <taxon>Beijerinckiaceae</taxon>
        <taxon>Methylocella</taxon>
    </lineage>
</organism>
<feature type="chain" id="PRO_1000190617" description="Imidazoleglycerol-phosphate dehydratase">
    <location>
        <begin position="1"/>
        <end position="197"/>
    </location>
</feature>
<reference key="1">
    <citation type="journal article" date="2010" name="J. Bacteriol.">
        <title>Complete genome sequence of the aerobic facultative methanotroph Methylocella silvestris BL2.</title>
        <authorList>
            <person name="Chen Y."/>
            <person name="Crombie A."/>
            <person name="Rahman M.T."/>
            <person name="Dedysh S.N."/>
            <person name="Liesack W."/>
            <person name="Stott M.B."/>
            <person name="Alam M."/>
            <person name="Theisen A.R."/>
            <person name="Murrell J.C."/>
            <person name="Dunfield P.F."/>
        </authorList>
    </citation>
    <scope>NUCLEOTIDE SEQUENCE [LARGE SCALE GENOMIC DNA]</scope>
    <source>
        <strain>DSM 15510 / CIP 108128 / LMG 27833 / NCIMB 13906 / BL2</strain>
    </source>
</reference>
<dbReference type="EC" id="4.2.1.19" evidence="1"/>
<dbReference type="EMBL" id="CP001280">
    <property type="protein sequence ID" value="ACK51478.1"/>
    <property type="molecule type" value="Genomic_DNA"/>
</dbReference>
<dbReference type="RefSeq" id="WP_012591547.1">
    <property type="nucleotide sequence ID" value="NC_011666.1"/>
</dbReference>
<dbReference type="SMR" id="B8EM89"/>
<dbReference type="STRING" id="395965.Msil_2554"/>
<dbReference type="KEGG" id="msl:Msil_2554"/>
<dbReference type="eggNOG" id="COG0131">
    <property type="taxonomic scope" value="Bacteria"/>
</dbReference>
<dbReference type="HOGENOM" id="CLU_044308_3_0_5"/>
<dbReference type="OrthoDB" id="9813612at2"/>
<dbReference type="UniPathway" id="UPA00031">
    <property type="reaction ID" value="UER00011"/>
</dbReference>
<dbReference type="Proteomes" id="UP000002257">
    <property type="component" value="Chromosome"/>
</dbReference>
<dbReference type="GO" id="GO:0005737">
    <property type="term" value="C:cytoplasm"/>
    <property type="evidence" value="ECO:0007669"/>
    <property type="project" value="UniProtKB-SubCell"/>
</dbReference>
<dbReference type="GO" id="GO:0004424">
    <property type="term" value="F:imidazoleglycerol-phosphate dehydratase activity"/>
    <property type="evidence" value="ECO:0007669"/>
    <property type="project" value="UniProtKB-UniRule"/>
</dbReference>
<dbReference type="GO" id="GO:0000105">
    <property type="term" value="P:L-histidine biosynthetic process"/>
    <property type="evidence" value="ECO:0007669"/>
    <property type="project" value="UniProtKB-UniRule"/>
</dbReference>
<dbReference type="CDD" id="cd07914">
    <property type="entry name" value="IGPD"/>
    <property type="match status" value="1"/>
</dbReference>
<dbReference type="FunFam" id="3.30.230.40:FF:000001">
    <property type="entry name" value="Imidazoleglycerol-phosphate dehydratase HisB"/>
    <property type="match status" value="1"/>
</dbReference>
<dbReference type="FunFam" id="3.30.230.40:FF:000003">
    <property type="entry name" value="Imidazoleglycerol-phosphate dehydratase HisB"/>
    <property type="match status" value="1"/>
</dbReference>
<dbReference type="Gene3D" id="3.30.230.40">
    <property type="entry name" value="Imidazole glycerol phosphate dehydratase, domain 1"/>
    <property type="match status" value="2"/>
</dbReference>
<dbReference type="HAMAP" id="MF_00076">
    <property type="entry name" value="HisB"/>
    <property type="match status" value="1"/>
</dbReference>
<dbReference type="InterPro" id="IPR038494">
    <property type="entry name" value="IGPD_sf"/>
</dbReference>
<dbReference type="InterPro" id="IPR000807">
    <property type="entry name" value="ImidazoleglycerolP_deHydtase"/>
</dbReference>
<dbReference type="InterPro" id="IPR020565">
    <property type="entry name" value="ImidazoleglycerP_deHydtase_CS"/>
</dbReference>
<dbReference type="InterPro" id="IPR020568">
    <property type="entry name" value="Ribosomal_Su5_D2-typ_SF"/>
</dbReference>
<dbReference type="NCBIfam" id="NF002106">
    <property type="entry name" value="PRK00951.1-1"/>
    <property type="match status" value="1"/>
</dbReference>
<dbReference type="NCBIfam" id="NF002109">
    <property type="entry name" value="PRK00951.1-5"/>
    <property type="match status" value="1"/>
</dbReference>
<dbReference type="NCBIfam" id="NF002110">
    <property type="entry name" value="PRK00951.1-6"/>
    <property type="match status" value="1"/>
</dbReference>
<dbReference type="NCBIfam" id="NF002111">
    <property type="entry name" value="PRK00951.2-1"/>
    <property type="match status" value="1"/>
</dbReference>
<dbReference type="NCBIfam" id="NF002114">
    <property type="entry name" value="PRK00951.2-4"/>
    <property type="match status" value="1"/>
</dbReference>
<dbReference type="NCBIfam" id="NF002116">
    <property type="entry name" value="PRK00951.2-6"/>
    <property type="match status" value="1"/>
</dbReference>
<dbReference type="PANTHER" id="PTHR23133:SF2">
    <property type="entry name" value="IMIDAZOLEGLYCEROL-PHOSPHATE DEHYDRATASE"/>
    <property type="match status" value="1"/>
</dbReference>
<dbReference type="PANTHER" id="PTHR23133">
    <property type="entry name" value="IMIDAZOLEGLYCEROL-PHOSPHATE DEHYDRATASE HIS7"/>
    <property type="match status" value="1"/>
</dbReference>
<dbReference type="Pfam" id="PF00475">
    <property type="entry name" value="IGPD"/>
    <property type="match status" value="1"/>
</dbReference>
<dbReference type="SUPFAM" id="SSF54211">
    <property type="entry name" value="Ribosomal protein S5 domain 2-like"/>
    <property type="match status" value="2"/>
</dbReference>
<dbReference type="PROSITE" id="PS00954">
    <property type="entry name" value="IGP_DEHYDRATASE_1"/>
    <property type="match status" value="1"/>
</dbReference>
<dbReference type="PROSITE" id="PS00955">
    <property type="entry name" value="IGP_DEHYDRATASE_2"/>
    <property type="match status" value="1"/>
</dbReference>
<name>HIS7_METSB</name>